<comment type="function">
    <text evidence="3">A cytochrome P450 monooxygenase involved in the metabolism of various endogenous substrates, including fatty acids, steroid hormones and vitamins. Mechanistically, uses molecular oxygen inserting one oxygen atom into a substrate, and reducing the second into a water molecule, with two electrons provided by NADPH via cytochrome P450 reductase (CPR; NADPH-ferrihemoprotein reductase). Catalyzes the hydroxylation of carbon-hydrogen bonds. Exhibits high catalytic activity for the formation of hydroxyestrogens from estrone (E1) and 17beta-estradiol (E2), namely 2-hydroxy E1 and E2, as well as D-ring hydroxylated E1 and E2 at the C15alpha and C16alpha positions. Displays different regioselectivities for polyunsaturated fatty acids (PUFA) hydroxylation. Catalyzes the epoxidation of double bonds of certain PUFA. Converts arachidonic acid toward epoxyeicosatrienoic acid (EET) regioisomers, 8,9-, 11,12-, and 14,15-EET, that function as lipid mediators in the vascular system. Displays an absolute stereoselectivity in the epoxidation of eicosapentaenoic acid (EPA) producing the 17(R),18(S) enantiomer. May play an important role in all-trans retinoic acid biosynthesis in extrahepatic tissues. Catalyzes two successive oxidative transformation of all-trans retinol to all-trans retinal and then to the active form all-trans retinoic acid. May also participate in eicosanoids metabolism by converting hydroperoxide species into oxo metabolites (lipoxygenase-like reaction, NADPH-independent).</text>
</comment>
<comment type="catalytic activity">
    <reaction evidence="3">
        <text>an organic molecule + reduced [NADPH--hemoprotein reductase] + O2 = an alcohol + oxidized [NADPH--hemoprotein reductase] + H2O + H(+)</text>
        <dbReference type="Rhea" id="RHEA:17149"/>
        <dbReference type="Rhea" id="RHEA-COMP:11964"/>
        <dbReference type="Rhea" id="RHEA-COMP:11965"/>
        <dbReference type="ChEBI" id="CHEBI:15377"/>
        <dbReference type="ChEBI" id="CHEBI:15378"/>
        <dbReference type="ChEBI" id="CHEBI:15379"/>
        <dbReference type="ChEBI" id="CHEBI:30879"/>
        <dbReference type="ChEBI" id="CHEBI:57618"/>
        <dbReference type="ChEBI" id="CHEBI:58210"/>
        <dbReference type="ChEBI" id="CHEBI:142491"/>
        <dbReference type="EC" id="1.14.14.1"/>
    </reaction>
    <physiologicalReaction direction="right-to-left" evidence="3">
        <dbReference type="Rhea" id="RHEA:17151"/>
    </physiologicalReaction>
</comment>
<comment type="catalytic activity">
    <reaction evidence="3">
        <text>estrone + reduced [NADPH--hemoprotein reductase] + O2 = 2-hydroxyestrone + oxidized [NADPH--hemoprotein reductase] + H2O + H(+)</text>
        <dbReference type="Rhea" id="RHEA:47208"/>
        <dbReference type="Rhea" id="RHEA-COMP:11964"/>
        <dbReference type="Rhea" id="RHEA-COMP:11965"/>
        <dbReference type="ChEBI" id="CHEBI:1156"/>
        <dbReference type="ChEBI" id="CHEBI:15377"/>
        <dbReference type="ChEBI" id="CHEBI:15378"/>
        <dbReference type="ChEBI" id="CHEBI:15379"/>
        <dbReference type="ChEBI" id="CHEBI:17263"/>
        <dbReference type="ChEBI" id="CHEBI:57618"/>
        <dbReference type="ChEBI" id="CHEBI:58210"/>
    </reaction>
    <physiologicalReaction direction="left-to-right" evidence="3">
        <dbReference type="Rhea" id="RHEA:47209"/>
    </physiologicalReaction>
</comment>
<comment type="catalytic activity">
    <reaction evidence="3">
        <text>estrone + reduced [NADPH--hemoprotein reductase] + O2 = 4-hydroxyestrone + oxidized [NADPH--hemoprotein reductase] + H2O + H(+)</text>
        <dbReference type="Rhea" id="RHEA:47292"/>
        <dbReference type="Rhea" id="RHEA-COMP:11964"/>
        <dbReference type="Rhea" id="RHEA-COMP:11965"/>
        <dbReference type="ChEBI" id="CHEBI:15377"/>
        <dbReference type="ChEBI" id="CHEBI:15378"/>
        <dbReference type="ChEBI" id="CHEBI:15379"/>
        <dbReference type="ChEBI" id="CHEBI:17263"/>
        <dbReference type="ChEBI" id="CHEBI:57618"/>
        <dbReference type="ChEBI" id="CHEBI:58210"/>
        <dbReference type="ChEBI" id="CHEBI:87602"/>
    </reaction>
    <physiologicalReaction direction="left-to-right" evidence="3">
        <dbReference type="Rhea" id="RHEA:47293"/>
    </physiologicalReaction>
</comment>
<comment type="catalytic activity">
    <reaction evidence="3">
        <text>estrone + reduced [NADPH--hemoprotein reductase] + O2 = 6alpha-hydroxyestrone + oxidized [NADPH--hemoprotein reductase] + H2O + H(+)</text>
        <dbReference type="Rhea" id="RHEA:47308"/>
        <dbReference type="Rhea" id="RHEA-COMP:11964"/>
        <dbReference type="Rhea" id="RHEA-COMP:11965"/>
        <dbReference type="ChEBI" id="CHEBI:15377"/>
        <dbReference type="ChEBI" id="CHEBI:15378"/>
        <dbReference type="ChEBI" id="CHEBI:15379"/>
        <dbReference type="ChEBI" id="CHEBI:17263"/>
        <dbReference type="ChEBI" id="CHEBI:57618"/>
        <dbReference type="ChEBI" id="CHEBI:58210"/>
        <dbReference type="ChEBI" id="CHEBI:87605"/>
    </reaction>
    <physiologicalReaction direction="left-to-right" evidence="3">
        <dbReference type="Rhea" id="RHEA:47309"/>
    </physiologicalReaction>
</comment>
<comment type="catalytic activity">
    <reaction evidence="3">
        <text>estrone + reduced [NADPH--hemoprotein reductase] + O2 = 15alpha-hydroxyestrone + oxidized [NADPH--hemoprotein reductase] + H2O + H(+)</text>
        <dbReference type="Rhea" id="RHEA:47312"/>
        <dbReference type="Rhea" id="RHEA-COMP:11964"/>
        <dbReference type="Rhea" id="RHEA-COMP:11965"/>
        <dbReference type="ChEBI" id="CHEBI:15377"/>
        <dbReference type="ChEBI" id="CHEBI:15378"/>
        <dbReference type="ChEBI" id="CHEBI:15379"/>
        <dbReference type="ChEBI" id="CHEBI:17263"/>
        <dbReference type="ChEBI" id="CHEBI:57618"/>
        <dbReference type="ChEBI" id="CHEBI:58210"/>
        <dbReference type="ChEBI" id="CHEBI:87618"/>
    </reaction>
    <physiologicalReaction direction="left-to-right" evidence="3">
        <dbReference type="Rhea" id="RHEA:47313"/>
    </physiologicalReaction>
</comment>
<comment type="catalytic activity">
    <reaction evidence="3">
        <text>estrone + reduced [NADPH--hemoprotein reductase] + O2 = 16alpha-hydroxyestrone + oxidized [NADPH--hemoprotein reductase] + H2O + H(+)</text>
        <dbReference type="Rhea" id="RHEA:47204"/>
        <dbReference type="Rhea" id="RHEA-COMP:11964"/>
        <dbReference type="Rhea" id="RHEA-COMP:11965"/>
        <dbReference type="ChEBI" id="CHEBI:776"/>
        <dbReference type="ChEBI" id="CHEBI:15377"/>
        <dbReference type="ChEBI" id="CHEBI:15378"/>
        <dbReference type="ChEBI" id="CHEBI:15379"/>
        <dbReference type="ChEBI" id="CHEBI:17263"/>
        <dbReference type="ChEBI" id="CHEBI:57618"/>
        <dbReference type="ChEBI" id="CHEBI:58210"/>
    </reaction>
    <physiologicalReaction direction="left-to-right" evidence="3">
        <dbReference type="Rhea" id="RHEA:47205"/>
    </physiologicalReaction>
</comment>
<comment type="catalytic activity">
    <reaction evidence="3">
        <text>17beta-estradiol + reduced [NADPH--hemoprotein reductase] + O2 = 2-hydroxy-17beta-estradiol + oxidized [NADPH--hemoprotein reductase] + H2O + H(+)</text>
        <dbReference type="Rhea" id="RHEA:47212"/>
        <dbReference type="Rhea" id="RHEA-COMP:11964"/>
        <dbReference type="Rhea" id="RHEA-COMP:11965"/>
        <dbReference type="ChEBI" id="CHEBI:15377"/>
        <dbReference type="ChEBI" id="CHEBI:15378"/>
        <dbReference type="ChEBI" id="CHEBI:15379"/>
        <dbReference type="ChEBI" id="CHEBI:16469"/>
        <dbReference type="ChEBI" id="CHEBI:28744"/>
        <dbReference type="ChEBI" id="CHEBI:57618"/>
        <dbReference type="ChEBI" id="CHEBI:58210"/>
    </reaction>
    <physiologicalReaction direction="left-to-right" evidence="3">
        <dbReference type="Rhea" id="RHEA:47213"/>
    </physiologicalReaction>
</comment>
<comment type="catalytic activity">
    <reaction evidence="3">
        <text>17beta-estradiol + reduced [NADPH--hemoprotein reductase] + O2 = 4-hydroxy-17beta-estradiol + oxidized [NADPH--hemoprotein reductase] + H2O + H(+)</text>
        <dbReference type="Rhea" id="RHEA:47280"/>
        <dbReference type="Rhea" id="RHEA-COMP:11964"/>
        <dbReference type="Rhea" id="RHEA-COMP:11965"/>
        <dbReference type="ChEBI" id="CHEBI:15377"/>
        <dbReference type="ChEBI" id="CHEBI:15378"/>
        <dbReference type="ChEBI" id="CHEBI:15379"/>
        <dbReference type="ChEBI" id="CHEBI:16469"/>
        <dbReference type="ChEBI" id="CHEBI:57618"/>
        <dbReference type="ChEBI" id="CHEBI:58210"/>
        <dbReference type="ChEBI" id="CHEBI:62845"/>
    </reaction>
    <physiologicalReaction direction="left-to-right" evidence="3">
        <dbReference type="Rhea" id="RHEA:47281"/>
    </physiologicalReaction>
</comment>
<comment type="catalytic activity">
    <reaction evidence="3">
        <text>17beta-estradiol + reduced [NADPH--hemoprotein reductase] + O2 = 6alpha-hydroxy-17beta-estradiol + oxidized [NADPH--hemoprotein reductase] + H2O + H(+)</text>
        <dbReference type="Rhea" id="RHEA:47284"/>
        <dbReference type="Rhea" id="RHEA-COMP:11964"/>
        <dbReference type="Rhea" id="RHEA-COMP:11965"/>
        <dbReference type="ChEBI" id="CHEBI:15377"/>
        <dbReference type="ChEBI" id="CHEBI:15378"/>
        <dbReference type="ChEBI" id="CHEBI:15379"/>
        <dbReference type="ChEBI" id="CHEBI:16469"/>
        <dbReference type="ChEBI" id="CHEBI:57618"/>
        <dbReference type="ChEBI" id="CHEBI:58210"/>
        <dbReference type="ChEBI" id="CHEBI:62847"/>
    </reaction>
    <physiologicalReaction direction="left-to-right" evidence="3">
        <dbReference type="Rhea" id="RHEA:47285"/>
    </physiologicalReaction>
</comment>
<comment type="catalytic activity">
    <reaction evidence="3">
        <text>17beta-estradiol + reduced [NADPH--hemoprotein reductase] + O2 = 7alpha-hydroxy-17beta-estradiol + oxidized [NADPH--hemoprotein reductase] + H2O + H(+)</text>
        <dbReference type="Rhea" id="RHEA:47288"/>
        <dbReference type="Rhea" id="RHEA-COMP:11964"/>
        <dbReference type="Rhea" id="RHEA-COMP:11965"/>
        <dbReference type="ChEBI" id="CHEBI:15377"/>
        <dbReference type="ChEBI" id="CHEBI:15378"/>
        <dbReference type="ChEBI" id="CHEBI:15379"/>
        <dbReference type="ChEBI" id="CHEBI:16469"/>
        <dbReference type="ChEBI" id="CHEBI:57618"/>
        <dbReference type="ChEBI" id="CHEBI:58210"/>
        <dbReference type="ChEBI" id="CHEBI:87598"/>
    </reaction>
    <physiologicalReaction direction="left-to-right" evidence="3">
        <dbReference type="Rhea" id="RHEA:47289"/>
    </physiologicalReaction>
</comment>
<comment type="catalytic activity">
    <reaction evidence="3">
        <text>17beta-estradiol + reduced [NADPH--hemoprotein reductase] + O2 = 15alpha-hydroxy-17beta-estradiol + oxidized [NADPH--hemoprotein reductase] + H2O + H(+)</text>
        <dbReference type="Rhea" id="RHEA:47276"/>
        <dbReference type="Rhea" id="RHEA-COMP:11964"/>
        <dbReference type="Rhea" id="RHEA-COMP:11965"/>
        <dbReference type="ChEBI" id="CHEBI:15377"/>
        <dbReference type="ChEBI" id="CHEBI:15378"/>
        <dbReference type="ChEBI" id="CHEBI:15379"/>
        <dbReference type="ChEBI" id="CHEBI:16469"/>
        <dbReference type="ChEBI" id="CHEBI:57618"/>
        <dbReference type="ChEBI" id="CHEBI:58210"/>
        <dbReference type="ChEBI" id="CHEBI:87593"/>
    </reaction>
    <physiologicalReaction direction="left-to-right" evidence="3">
        <dbReference type="Rhea" id="RHEA:47277"/>
    </physiologicalReaction>
</comment>
<comment type="catalytic activity">
    <reaction evidence="3">
        <text>(5Z,8Z,11Z)-eicosatrienoate + reduced [NADPH--hemoprotein reductase] + O2 = 19-hydroxy-(5Z,8Z,11Z)-eicosatrienoate + oxidized [NADPH--hemoprotein reductase] + H2O + H(+)</text>
        <dbReference type="Rhea" id="RHEA:50076"/>
        <dbReference type="Rhea" id="RHEA-COMP:11964"/>
        <dbReference type="Rhea" id="RHEA-COMP:11965"/>
        <dbReference type="ChEBI" id="CHEBI:15377"/>
        <dbReference type="ChEBI" id="CHEBI:15378"/>
        <dbReference type="ChEBI" id="CHEBI:15379"/>
        <dbReference type="ChEBI" id="CHEBI:57618"/>
        <dbReference type="ChEBI" id="CHEBI:58210"/>
        <dbReference type="ChEBI" id="CHEBI:78043"/>
        <dbReference type="ChEBI" id="CHEBI:132024"/>
    </reaction>
    <physiologicalReaction direction="left-to-right" evidence="3">
        <dbReference type="Rhea" id="RHEA:50077"/>
    </physiologicalReaction>
</comment>
<comment type="catalytic activity">
    <reaction evidence="3">
        <text>(5Z,8Z,11Z,14Z)-eicosatetraenoate + reduced [NADPH--hemoprotein reductase] + O2 = 16-hydroxy-(5Z,8Z,11Z,14Z)-eicosatetraenoate + oxidized [NADPH--hemoprotein reductase] + H2O + H(+)</text>
        <dbReference type="Rhea" id="RHEA:49972"/>
        <dbReference type="Rhea" id="RHEA-COMP:11964"/>
        <dbReference type="Rhea" id="RHEA-COMP:11965"/>
        <dbReference type="ChEBI" id="CHEBI:15377"/>
        <dbReference type="ChEBI" id="CHEBI:15378"/>
        <dbReference type="ChEBI" id="CHEBI:15379"/>
        <dbReference type="ChEBI" id="CHEBI:32395"/>
        <dbReference type="ChEBI" id="CHEBI:57618"/>
        <dbReference type="ChEBI" id="CHEBI:58210"/>
        <dbReference type="ChEBI" id="CHEBI:132019"/>
    </reaction>
    <physiologicalReaction direction="left-to-right" evidence="3">
        <dbReference type="Rhea" id="RHEA:49973"/>
    </physiologicalReaction>
</comment>
<comment type="catalytic activity">
    <reaction evidence="3">
        <text>(5Z,8Z,11Z,14Z)-eicosatetraenoate + reduced [NADPH--hemoprotein reductase] + O2 = 17-hydroxy-(5Z,8Z,11Z,14Z)-eicosatetraenoate + oxidized [NADPH--hemoprotein reductase] + H2O + H(+)</text>
        <dbReference type="Rhea" id="RHEA:49968"/>
        <dbReference type="Rhea" id="RHEA-COMP:11964"/>
        <dbReference type="Rhea" id="RHEA-COMP:11965"/>
        <dbReference type="ChEBI" id="CHEBI:15377"/>
        <dbReference type="ChEBI" id="CHEBI:15378"/>
        <dbReference type="ChEBI" id="CHEBI:15379"/>
        <dbReference type="ChEBI" id="CHEBI:32395"/>
        <dbReference type="ChEBI" id="CHEBI:57618"/>
        <dbReference type="ChEBI" id="CHEBI:58210"/>
        <dbReference type="ChEBI" id="CHEBI:132016"/>
    </reaction>
    <physiologicalReaction direction="left-to-right" evidence="3">
        <dbReference type="Rhea" id="RHEA:49969"/>
    </physiologicalReaction>
</comment>
<comment type="catalytic activity">
    <reaction evidence="3">
        <text>(5Z,8Z,11Z,14Z)-eicosatetraenoate + reduced [NADPH--hemoprotein reductase] + O2 = 18-hydroxy-(5Z,8Z,11Z,14Z)-eicosatetraenoate + oxidized [NADPH--hemoprotein reductase] + H2O + H(+)</text>
        <dbReference type="Rhea" id="RHEA:39811"/>
        <dbReference type="Rhea" id="RHEA-COMP:11964"/>
        <dbReference type="Rhea" id="RHEA-COMP:11965"/>
        <dbReference type="ChEBI" id="CHEBI:15377"/>
        <dbReference type="ChEBI" id="CHEBI:15378"/>
        <dbReference type="ChEBI" id="CHEBI:15379"/>
        <dbReference type="ChEBI" id="CHEBI:32395"/>
        <dbReference type="ChEBI" id="CHEBI:57618"/>
        <dbReference type="ChEBI" id="CHEBI:58210"/>
        <dbReference type="ChEBI" id="CHEBI:63590"/>
    </reaction>
    <physiologicalReaction direction="left-to-right" evidence="3">
        <dbReference type="Rhea" id="RHEA:39812"/>
    </physiologicalReaction>
</comment>
<comment type="catalytic activity">
    <reaction evidence="3">
        <text>(5Z,8Z,11Z,14Z)-eicosatetraenoate + reduced [NADPH--hemoprotein reductase] + O2 = 19-hydroxy-(5Z,8Z,11Z,14Z)-eicosatetraenoate + oxidized [NADPH--hemoprotein reductase] + H2O + H(+)</text>
        <dbReference type="Rhea" id="RHEA:39759"/>
        <dbReference type="Rhea" id="RHEA-COMP:11964"/>
        <dbReference type="Rhea" id="RHEA-COMP:11965"/>
        <dbReference type="ChEBI" id="CHEBI:15377"/>
        <dbReference type="ChEBI" id="CHEBI:15378"/>
        <dbReference type="ChEBI" id="CHEBI:15379"/>
        <dbReference type="ChEBI" id="CHEBI:32395"/>
        <dbReference type="ChEBI" id="CHEBI:57618"/>
        <dbReference type="ChEBI" id="CHEBI:58210"/>
        <dbReference type="ChEBI" id="CHEBI:76627"/>
    </reaction>
    <physiologicalReaction direction="left-to-right" evidence="3">
        <dbReference type="Rhea" id="RHEA:39760"/>
    </physiologicalReaction>
</comment>
<comment type="catalytic activity">
    <reaction evidence="3">
        <text>(5Z,8Z,11Z,14Z,17Z)-eicosapentaenoate + reduced [NADPH--hemoprotein reductase] + O2 = 19-hydroxy-(5Z,8Z,11Z,14Z,17Z)-eicosapentaenoate + oxidized [NADPH--hemoprotein reductase] + H2O + H(+)</text>
        <dbReference type="Rhea" id="RHEA:39787"/>
        <dbReference type="Rhea" id="RHEA-COMP:11964"/>
        <dbReference type="Rhea" id="RHEA-COMP:11965"/>
        <dbReference type="ChEBI" id="CHEBI:15377"/>
        <dbReference type="ChEBI" id="CHEBI:15378"/>
        <dbReference type="ChEBI" id="CHEBI:15379"/>
        <dbReference type="ChEBI" id="CHEBI:57618"/>
        <dbReference type="ChEBI" id="CHEBI:58210"/>
        <dbReference type="ChEBI" id="CHEBI:58562"/>
        <dbReference type="ChEBI" id="CHEBI:76636"/>
    </reaction>
    <physiologicalReaction direction="left-to-right" evidence="3">
        <dbReference type="Rhea" id="RHEA:39788"/>
    </physiologicalReaction>
</comment>
<comment type="catalytic activity">
    <reaction evidence="3">
        <text>(5Z,8Z,11Z,14Z)-eicosatetraenoate + reduced [NADPH--hemoprotein reductase] + O2 = (8R,9S)-epoxy-(5Z,11Z,14Z)-eicosatrienoate + oxidized [NADPH--hemoprotein reductase] + H2O + H(+)</text>
        <dbReference type="Rhea" id="RHEA:49884"/>
        <dbReference type="Rhea" id="RHEA-COMP:11964"/>
        <dbReference type="Rhea" id="RHEA-COMP:11965"/>
        <dbReference type="ChEBI" id="CHEBI:15377"/>
        <dbReference type="ChEBI" id="CHEBI:15378"/>
        <dbReference type="ChEBI" id="CHEBI:15379"/>
        <dbReference type="ChEBI" id="CHEBI:32395"/>
        <dbReference type="ChEBI" id="CHEBI:57618"/>
        <dbReference type="ChEBI" id="CHEBI:58210"/>
        <dbReference type="ChEBI" id="CHEBI:131975"/>
    </reaction>
    <physiologicalReaction direction="left-to-right" evidence="3">
        <dbReference type="Rhea" id="RHEA:49885"/>
    </physiologicalReaction>
</comment>
<comment type="catalytic activity">
    <reaction evidence="3">
        <text>(5Z,8Z,11Z,14Z)-eicosatetraenoate + reduced [NADPH--hemoprotein reductase] + O2 = (11R,12S)-epoxy-(5Z,8Z,14Z)-eicosatrienoate + oxidized [NADPH--hemoprotein reductase] + H2O + H(+)</text>
        <dbReference type="Rhea" id="RHEA:49880"/>
        <dbReference type="Rhea" id="RHEA-COMP:11964"/>
        <dbReference type="Rhea" id="RHEA-COMP:11965"/>
        <dbReference type="ChEBI" id="CHEBI:15377"/>
        <dbReference type="ChEBI" id="CHEBI:15378"/>
        <dbReference type="ChEBI" id="CHEBI:15379"/>
        <dbReference type="ChEBI" id="CHEBI:32395"/>
        <dbReference type="ChEBI" id="CHEBI:57618"/>
        <dbReference type="ChEBI" id="CHEBI:58210"/>
        <dbReference type="ChEBI" id="CHEBI:131970"/>
    </reaction>
    <physiologicalReaction direction="left-to-right" evidence="3">
        <dbReference type="Rhea" id="RHEA:49881"/>
    </physiologicalReaction>
</comment>
<comment type="catalytic activity">
    <reaction evidence="3">
        <text>(5Z,8Z,11Z,14Z)-eicosatetraenoate + reduced [NADPH--hemoprotein reductase] + O2 = (14S,15R)-epoxy-(5Z,8Z,11Z)-eicosatrienoate + oxidized [NADPH--hemoprotein reductase] + H2O + H(+)</text>
        <dbReference type="Rhea" id="RHEA:49856"/>
        <dbReference type="Rhea" id="RHEA-COMP:11964"/>
        <dbReference type="Rhea" id="RHEA-COMP:11965"/>
        <dbReference type="ChEBI" id="CHEBI:15377"/>
        <dbReference type="ChEBI" id="CHEBI:15378"/>
        <dbReference type="ChEBI" id="CHEBI:15379"/>
        <dbReference type="ChEBI" id="CHEBI:32395"/>
        <dbReference type="ChEBI" id="CHEBI:57618"/>
        <dbReference type="ChEBI" id="CHEBI:58210"/>
        <dbReference type="ChEBI" id="CHEBI:131964"/>
    </reaction>
    <physiologicalReaction direction="left-to-right" evidence="3">
        <dbReference type="Rhea" id="RHEA:49857"/>
    </physiologicalReaction>
</comment>
<comment type="catalytic activity">
    <reaction evidence="3">
        <text>(5Z,8Z,11Z,14Z)-eicosatetraenoate + reduced [NADPH--hemoprotein reductase] + O2 = (14R,15S)-epoxy-(5Z,8Z,11Z)-eicosatrienoate + oxidized [NADPH--hemoprotein reductase] + H2O + H(+)</text>
        <dbReference type="Rhea" id="RHEA:49860"/>
        <dbReference type="Rhea" id="RHEA-COMP:11964"/>
        <dbReference type="Rhea" id="RHEA-COMP:11965"/>
        <dbReference type="ChEBI" id="CHEBI:15377"/>
        <dbReference type="ChEBI" id="CHEBI:15378"/>
        <dbReference type="ChEBI" id="CHEBI:15379"/>
        <dbReference type="ChEBI" id="CHEBI:32395"/>
        <dbReference type="ChEBI" id="CHEBI:57618"/>
        <dbReference type="ChEBI" id="CHEBI:58210"/>
        <dbReference type="ChEBI" id="CHEBI:131965"/>
    </reaction>
    <physiologicalReaction direction="left-to-right" evidence="3">
        <dbReference type="Rhea" id="RHEA:49861"/>
    </physiologicalReaction>
</comment>
<comment type="catalytic activity">
    <reaction evidence="3">
        <text>(5Z,8Z,11Z,14Z,17Z)-eicosapentaenoate + reduced [NADPH--hemoprotein reductase] + O2 = (17R,18S)-epoxy-(5Z,8Z,11Z,14Z)-eicosatetraenoate + oxidized [NADPH--hemoprotein reductase] + H2O + H(+)</text>
        <dbReference type="Rhea" id="RHEA:39779"/>
        <dbReference type="Rhea" id="RHEA-COMP:11964"/>
        <dbReference type="Rhea" id="RHEA-COMP:11965"/>
        <dbReference type="ChEBI" id="CHEBI:15377"/>
        <dbReference type="ChEBI" id="CHEBI:15378"/>
        <dbReference type="ChEBI" id="CHEBI:15379"/>
        <dbReference type="ChEBI" id="CHEBI:57618"/>
        <dbReference type="ChEBI" id="CHEBI:58210"/>
        <dbReference type="ChEBI" id="CHEBI:58562"/>
        <dbReference type="ChEBI" id="CHEBI:76634"/>
    </reaction>
    <physiologicalReaction direction="left-to-right" evidence="3">
        <dbReference type="Rhea" id="RHEA:39780"/>
    </physiologicalReaction>
</comment>
<comment type="catalytic activity">
    <reaction evidence="3">
        <text>(4Z,7Z,10Z,13Z,16Z,19Z)-docosahexaenoate + reduced [NADPH--hemoprotein reductase] + O2 = (19S,20R)-epoxy-(4Z,7Z,10Z,13Z,16Z)-docosapentaenoate + oxidized [NADPH--hemoprotein reductase] + H2O + H(+)</text>
        <dbReference type="Rhea" id="RHEA:52124"/>
        <dbReference type="Rhea" id="RHEA-COMP:11964"/>
        <dbReference type="Rhea" id="RHEA-COMP:11965"/>
        <dbReference type="ChEBI" id="CHEBI:15377"/>
        <dbReference type="ChEBI" id="CHEBI:15378"/>
        <dbReference type="ChEBI" id="CHEBI:15379"/>
        <dbReference type="ChEBI" id="CHEBI:57618"/>
        <dbReference type="ChEBI" id="CHEBI:58210"/>
        <dbReference type="ChEBI" id="CHEBI:77016"/>
        <dbReference type="ChEBI" id="CHEBI:136411"/>
    </reaction>
    <physiologicalReaction direction="left-to-right" evidence="3">
        <dbReference type="Rhea" id="RHEA:52125"/>
    </physiologicalReaction>
</comment>
<comment type="catalytic activity">
    <reaction evidence="3">
        <text>(4Z,7Z,10Z,13Z,16Z,19Z)-docosahexaenoate + reduced [NADPH--hemoprotein reductase] + O2 = (19R,20S)-epoxy-(4Z,7Z,10Z,13Z,16Z)-docosapentaenoate + oxidized [NADPH--hemoprotein reductase] + H2O + H(+)</text>
        <dbReference type="Rhea" id="RHEA:52120"/>
        <dbReference type="Rhea" id="RHEA-COMP:11964"/>
        <dbReference type="Rhea" id="RHEA-COMP:11965"/>
        <dbReference type="ChEBI" id="CHEBI:15377"/>
        <dbReference type="ChEBI" id="CHEBI:15378"/>
        <dbReference type="ChEBI" id="CHEBI:15379"/>
        <dbReference type="ChEBI" id="CHEBI:57618"/>
        <dbReference type="ChEBI" id="CHEBI:58210"/>
        <dbReference type="ChEBI" id="CHEBI:77016"/>
        <dbReference type="ChEBI" id="CHEBI:136410"/>
    </reaction>
    <physiologicalReaction direction="left-to-right" evidence="3">
        <dbReference type="Rhea" id="RHEA:52121"/>
    </physiologicalReaction>
</comment>
<comment type="catalytic activity">
    <reaction evidence="3">
        <text>all-trans-retinol + reduced [NADPH--hemoprotein reductase] + O2 = all-trans-retinal + oxidized [NADPH--hemoprotein reductase] + 2 H2O + H(+)</text>
        <dbReference type="Rhea" id="RHEA:42092"/>
        <dbReference type="Rhea" id="RHEA-COMP:11964"/>
        <dbReference type="Rhea" id="RHEA-COMP:11965"/>
        <dbReference type="ChEBI" id="CHEBI:15377"/>
        <dbReference type="ChEBI" id="CHEBI:15378"/>
        <dbReference type="ChEBI" id="CHEBI:15379"/>
        <dbReference type="ChEBI" id="CHEBI:17336"/>
        <dbReference type="ChEBI" id="CHEBI:17898"/>
        <dbReference type="ChEBI" id="CHEBI:57618"/>
        <dbReference type="ChEBI" id="CHEBI:58210"/>
    </reaction>
    <physiologicalReaction direction="left-to-right" evidence="3">
        <dbReference type="Rhea" id="RHEA:42093"/>
    </physiologicalReaction>
</comment>
<comment type="catalytic activity">
    <reaction evidence="3">
        <text>all-trans-retinal + reduced [NADPH--hemoprotein reductase] + O2 = all-trans-retinoate + oxidized [NADPH--hemoprotein reductase] + H2O + 2 H(+)</text>
        <dbReference type="Rhea" id="RHEA:42088"/>
        <dbReference type="Rhea" id="RHEA-COMP:11964"/>
        <dbReference type="Rhea" id="RHEA-COMP:11965"/>
        <dbReference type="ChEBI" id="CHEBI:15377"/>
        <dbReference type="ChEBI" id="CHEBI:15378"/>
        <dbReference type="ChEBI" id="CHEBI:15379"/>
        <dbReference type="ChEBI" id="CHEBI:17898"/>
        <dbReference type="ChEBI" id="CHEBI:35291"/>
        <dbReference type="ChEBI" id="CHEBI:57618"/>
        <dbReference type="ChEBI" id="CHEBI:58210"/>
    </reaction>
    <physiologicalReaction direction="left-to-right" evidence="3">
        <dbReference type="Rhea" id="RHEA:42089"/>
    </physiologicalReaction>
</comment>
<comment type="catalytic activity">
    <reaction evidence="3">
        <text>(13S)-hydroperoxy-(9Z,11E)-octadecadienoate = 13-oxo-(9Z,11E)-octadecadienoate + H2O</text>
        <dbReference type="Rhea" id="RHEA:48716"/>
        <dbReference type="ChEBI" id="CHEBI:15377"/>
        <dbReference type="ChEBI" id="CHEBI:57466"/>
        <dbReference type="ChEBI" id="CHEBI:90781"/>
    </reaction>
    <physiologicalReaction direction="left-to-right" evidence="3">
        <dbReference type="Rhea" id="RHEA:48717"/>
    </physiologicalReaction>
</comment>
<comment type="catalytic activity">
    <reaction evidence="3">
        <text>(12S)-hydroperoxy-(5Z,8Z,10E,14Z)-eicosatetraenoate = 12-oxo-(5Z,8Z,10E,14Z)-eicosatetraenoate + H2O</text>
        <dbReference type="Rhea" id="RHEA:37947"/>
        <dbReference type="ChEBI" id="CHEBI:15377"/>
        <dbReference type="ChEBI" id="CHEBI:57444"/>
        <dbReference type="ChEBI" id="CHEBI:75231"/>
        <dbReference type="EC" id="4.2.1.152"/>
    </reaction>
    <physiologicalReaction direction="left-to-right" evidence="3">
        <dbReference type="Rhea" id="RHEA:37948"/>
    </physiologicalReaction>
</comment>
<comment type="catalytic activity">
    <reaction evidence="3">
        <text>(15S)-hydroperoxy-(5Z,8Z,11Z,13E)-eicosatetraenoate = 15-oxo-(5Z,8Z,11Z,13E)-eicosatetraenoate + H2O</text>
        <dbReference type="Rhea" id="RHEA:48636"/>
        <dbReference type="ChEBI" id="CHEBI:15377"/>
        <dbReference type="ChEBI" id="CHEBI:57410"/>
        <dbReference type="ChEBI" id="CHEBI:57446"/>
    </reaction>
    <physiologicalReaction direction="left-to-right" evidence="3">
        <dbReference type="Rhea" id="RHEA:48637"/>
    </physiologicalReaction>
</comment>
<comment type="catalytic activity">
    <reaction evidence="3">
        <text>(5S)-hydroperoxy-(6E,8Z,11Z,14Z)-eicosatetraenoate = 5-oxo-(6E,8Z,11Z,14Z)-eicosatetraenoate + H2O</text>
        <dbReference type="Rhea" id="RHEA:48632"/>
        <dbReference type="ChEBI" id="CHEBI:15377"/>
        <dbReference type="ChEBI" id="CHEBI:57450"/>
        <dbReference type="ChEBI" id="CHEBI:65342"/>
    </reaction>
    <physiologicalReaction direction="left-to-right" evidence="3">
        <dbReference type="Rhea" id="RHEA:48633"/>
    </physiologicalReaction>
</comment>
<comment type="cofactor">
    <cofactor evidence="1">
        <name>heme</name>
        <dbReference type="ChEBI" id="CHEBI:30413"/>
    </cofactor>
</comment>
<comment type="pathway">
    <text evidence="3">Steroid hormone biosynthesis.</text>
</comment>
<comment type="pathway">
    <text evidence="3">Lipid metabolism; fatty acid metabolism.</text>
</comment>
<comment type="pathway">
    <text evidence="3">Cofactor metabolism; retinol metabolism.</text>
</comment>
<comment type="subunit">
    <text evidence="2">Interacts with cytosolic chaperones HSP70 and HSP90; this interaction is required for initial targeting to mitochondria. Interacts (via mitochondrial targeting signal) with TOMM40 (via N-terminus); this interaction is required for translocation across the mitochondrial outer membrane.</text>
</comment>
<comment type="subcellular location">
    <subcellularLocation>
        <location evidence="2">Endoplasmic reticulum membrane</location>
        <topology evidence="2">Peripheral membrane protein</topology>
    </subcellularLocation>
    <subcellularLocation>
        <location evidence="2">Mitochondrion inner membrane</location>
        <topology evidence="2">Peripheral membrane protein</topology>
    </subcellularLocation>
    <subcellularLocation>
        <location evidence="2">Microsome membrane</location>
        <topology evidence="2">Peripheral membrane protein</topology>
    </subcellularLocation>
    <subcellularLocation>
        <location evidence="2">Cytoplasm</location>
    </subcellularLocation>
</comment>
<comment type="induction">
    <text>By 2,3,7,8-tetrachlorodibenzo-p-dioxin (TCDD) and by 3-methylcholanthrene (3MC).</text>
</comment>
<comment type="similarity">
    <text evidence="4">Belongs to the cytochrome P450 family.</text>
</comment>
<protein>
    <recommendedName>
        <fullName>Cytochrome P450 1A1</fullName>
        <ecNumber evidence="3">1.14.14.1</ecNumber>
    </recommendedName>
    <alternativeName>
        <fullName>CYPIA1</fullName>
    </alternativeName>
    <alternativeName>
        <fullName>Cytochrome P-450 PHPAH1</fullName>
    </alternativeName>
    <alternativeName>
        <fullName>Cytochrome P450 isozyme 6</fullName>
        <shortName>Cytochrome P450 LM6</shortName>
    </alternativeName>
    <alternativeName>
        <fullName>Cytochrome P450-C</fullName>
    </alternativeName>
    <alternativeName>
        <fullName>Cytochrome P450-P1</fullName>
    </alternativeName>
    <alternativeName>
        <fullName>Hydroperoxy icosatetraenoate dehydratase</fullName>
        <ecNumber evidence="3">4.2.1.152</ecNumber>
    </alternativeName>
</protein>
<accession>P05176</accession>
<reference key="1">
    <citation type="journal article" date="1987" name="J. Biochem.">
        <title>Structural analysis of cloned cDNAs for polycyclic hydrocarbon-inducible forms of rabbit liver microsomal cytochrome P-450.</title>
        <authorList>
            <person name="Kagawa N."/>
            <person name="Mihara K."/>
            <person name="Sato R."/>
        </authorList>
    </citation>
    <scope>NUCLEOTIDE SEQUENCE [MRNA]</scope>
    <source>
        <tissue>Liver</tissue>
    </source>
</reference>
<reference key="2">
    <citation type="journal article" date="1985" name="Proc. Natl. Acad. Sci. U.S.A.">
        <title>Cloning and characterization of cDNAs encoding 2,3,7,8-tetrachlorodibenzo-p-dioxin-inducible rabbit mRNAs for cytochrome P-450 isozymes 4 and 6.</title>
        <authorList>
            <person name="Okino S.T."/>
            <person name="Quattrochi L.C."/>
            <person name="Barnes H.J."/>
            <person name="Osanto S."/>
            <person name="Griffin K.J."/>
            <person name="Johnson E.F."/>
            <person name="Tukey R.H."/>
        </authorList>
    </citation>
    <scope>NUCLEOTIDE SEQUENCE [MRNA] OF 73-518</scope>
</reference>
<sequence length="518" mass="58278">MVSDFGLPTFISATELLLASAVFCLVFWVAGASKPRVPKGLKRLPGPWGWPLLGHVLTLGKNPHVALARLSRRYGDVFQIRLGSTPVVVLSGLDTIKQALVRQGDDFKGRPDLYSFSFVTKGQSMIFGSDSGPVWAARRRLAQNALNSFSVASDPASSSSCYLEEHVSQEAENLISKFQELMAAVGHFDPYRYVVMSVANVICAMCFGRRYDHDDQELLSLVNLNDEFGKVAASGSPADFFLILRYLPNPALDTFKDLNERFYSFTQERVKEHCRSFEKGHIRDITDSLIKHYRVDRLDENANVQVSDEKTVGIVLDLFGAGFDTVTTAISWSLMYLVTKPRIQRKIQEELDAVVGRARRPRFSDRPQLPYLEAVIMETFRHTSFLPFTIPHSTTRDTSLGGFYIPKGRCVFVNQWQNNHDPELWGDPEAFRPERFLTPSGAVDKALTEKVLLFGLGKRKCIGETIGRLEVFLFLATLLQQVEFSVSPGTTVDMTPIYGLTMKHARCEHFQAKLRFEA</sequence>
<name>CP1A1_RABIT</name>
<organism>
    <name type="scientific">Oryctolagus cuniculus</name>
    <name type="common">Rabbit</name>
    <dbReference type="NCBI Taxonomy" id="9986"/>
    <lineage>
        <taxon>Eukaryota</taxon>
        <taxon>Metazoa</taxon>
        <taxon>Chordata</taxon>
        <taxon>Craniata</taxon>
        <taxon>Vertebrata</taxon>
        <taxon>Euteleostomi</taxon>
        <taxon>Mammalia</taxon>
        <taxon>Eutheria</taxon>
        <taxon>Euarchontoglires</taxon>
        <taxon>Glires</taxon>
        <taxon>Lagomorpha</taxon>
        <taxon>Leporidae</taxon>
        <taxon>Oryctolagus</taxon>
    </lineage>
</organism>
<proteinExistence type="evidence at transcript level"/>
<feature type="chain" id="PRO_0000051632" description="Cytochrome P450 1A1">
    <location>
        <begin position="1"/>
        <end position="518"/>
    </location>
</feature>
<feature type="region of interest" description="Mitochondrial targeting signal" evidence="2">
    <location>
        <begin position="33"/>
        <end position="44"/>
    </location>
</feature>
<feature type="binding site" evidence="1">
    <location>
        <position position="228"/>
    </location>
    <ligand>
        <name>substrate</name>
    </ligand>
</feature>
<feature type="binding site" description="axial binding residue">
    <location>
        <position position="461"/>
    </location>
    <ligand>
        <name>heme</name>
        <dbReference type="ChEBI" id="CHEBI:30413"/>
    </ligand>
    <ligandPart>
        <name>Fe</name>
        <dbReference type="ChEBI" id="CHEBI:18248"/>
    </ligandPart>
</feature>
<feature type="glycosylation site" description="O-linked (GlcNAc) serine" evidence="1">
    <location>
        <position position="71"/>
    </location>
</feature>
<feature type="sequence conflict" description="In Ref. 2; AAA31431." evidence="4" ref="2">
    <original>R</original>
    <variation>P</variation>
    <location>
        <position position="73"/>
    </location>
</feature>
<feature type="sequence conflict" description="In Ref. 2; AAA31431." evidence="4" ref="2">
    <original>L</original>
    <variation>R</variation>
    <location>
        <position position="146"/>
    </location>
</feature>
<feature type="sequence conflict" description="In Ref. 2; AAA31431." evidence="4" ref="2">
    <original>SK</original>
    <variation>GR</variation>
    <location>
        <begin position="176"/>
        <end position="177"/>
    </location>
</feature>
<feature type="sequence conflict" description="In Ref. 2; AAA31431." evidence="4" ref="2">
    <original>PRIQR</original>
    <variation>RQHTRE</variation>
    <location>
        <begin position="341"/>
        <end position="345"/>
    </location>
</feature>
<feature type="sequence conflict" description="In Ref. 2; AAA31431." evidence="4" ref="2">
    <original>P</original>
    <variation>R</variation>
    <location>
        <position position="422"/>
    </location>
</feature>
<feature type="sequence conflict" description="In Ref. 2; AAA31431." evidence="4" ref="2">
    <original>D</original>
    <variation>V</variation>
    <location>
        <position position="427"/>
    </location>
</feature>
<feature type="sequence conflict" description="In Ref. 2; AAA31431." evidence="4" ref="2">
    <original>EA</original>
    <variation>RS</variation>
    <location>
        <begin position="429"/>
        <end position="430"/>
    </location>
</feature>
<feature type="sequence conflict" description="In Ref. 2; AAA31431." evidence="4" ref="2">
    <original>AV</original>
    <variation>TL</variation>
    <location>
        <begin position="442"/>
        <end position="443"/>
    </location>
</feature>
<feature type="sequence conflict" description="In Ref. 2; AAA31431." evidence="4" ref="2">
    <original>ALTE</original>
    <variation>GPDD</variation>
    <location>
        <begin position="446"/>
        <end position="449"/>
    </location>
</feature>
<feature type="sequence conflict" description="In Ref. 2; AAA31431." evidence="4" ref="2">
    <original>G</original>
    <variation>A</variation>
    <location>
        <position position="463"/>
    </location>
</feature>
<dbReference type="EC" id="1.14.14.1" evidence="3"/>
<dbReference type="EC" id="4.2.1.152" evidence="3"/>
<dbReference type="EMBL" id="X05685">
    <property type="protein sequence ID" value="CAA29170.1"/>
    <property type="molecule type" value="mRNA"/>
</dbReference>
<dbReference type="EMBL" id="M11727">
    <property type="protein sequence ID" value="AAA31431.1"/>
    <property type="molecule type" value="mRNA"/>
</dbReference>
<dbReference type="PIR" id="A27821">
    <property type="entry name" value="A27821"/>
</dbReference>
<dbReference type="RefSeq" id="NP_001164543.1">
    <property type="nucleotide sequence ID" value="NM_001171072.1"/>
</dbReference>
<dbReference type="RefSeq" id="XP_008250622.1">
    <property type="nucleotide sequence ID" value="XM_008252400.2"/>
</dbReference>
<dbReference type="SMR" id="P05176"/>
<dbReference type="FunCoup" id="P05176">
    <property type="interactions" value="411"/>
</dbReference>
<dbReference type="STRING" id="9986.ENSOCUP00000015239"/>
<dbReference type="GlyCosmos" id="P05176">
    <property type="glycosylation" value="1 site, No reported glycans"/>
</dbReference>
<dbReference type="PaxDb" id="9986-ENSOCUP00000015239"/>
<dbReference type="Ensembl" id="ENSOCUT00000017743.4">
    <property type="protein sequence ID" value="ENSOCUP00000015239.2"/>
    <property type="gene ID" value="ENSOCUG00000017744.4"/>
</dbReference>
<dbReference type="GeneID" id="100328613"/>
<dbReference type="KEGG" id="ocu:100328613"/>
<dbReference type="eggNOG" id="KOG0156">
    <property type="taxonomic scope" value="Eukaryota"/>
</dbReference>
<dbReference type="GeneTree" id="ENSGT00950000183037"/>
<dbReference type="HOGENOM" id="CLU_001570_22_0_1"/>
<dbReference type="InParanoid" id="P05176"/>
<dbReference type="OMA" id="DPRAYWQ"/>
<dbReference type="OrthoDB" id="1055148at2759"/>
<dbReference type="TreeFam" id="TF105095"/>
<dbReference type="UniPathway" id="UPA00199"/>
<dbReference type="UniPathway" id="UPA00912"/>
<dbReference type="Proteomes" id="UP000001811">
    <property type="component" value="Unplaced"/>
</dbReference>
<dbReference type="Bgee" id="ENSOCUG00000017744">
    <property type="expression patterns" value="Expressed in liver and 14 other cell types or tissues"/>
</dbReference>
<dbReference type="GO" id="GO:0005789">
    <property type="term" value="C:endoplasmic reticulum membrane"/>
    <property type="evidence" value="ECO:0007669"/>
    <property type="project" value="UniProtKB-SubCell"/>
</dbReference>
<dbReference type="GO" id="GO:0005743">
    <property type="term" value="C:mitochondrial inner membrane"/>
    <property type="evidence" value="ECO:0000250"/>
    <property type="project" value="UniProtKB"/>
</dbReference>
<dbReference type="GO" id="GO:0008391">
    <property type="term" value="F:arachidonate monooxygenase activity"/>
    <property type="evidence" value="ECO:0007669"/>
    <property type="project" value="Ensembl"/>
</dbReference>
<dbReference type="GO" id="GO:0101020">
    <property type="term" value="F:estrogen 16-alpha-hydroxylase activity"/>
    <property type="evidence" value="ECO:0000250"/>
    <property type="project" value="UniProtKB"/>
</dbReference>
<dbReference type="GO" id="GO:0101021">
    <property type="term" value="F:estrogen 2-hydroxylase activity"/>
    <property type="evidence" value="ECO:0000250"/>
    <property type="project" value="UniProtKB"/>
</dbReference>
<dbReference type="GO" id="GO:0020037">
    <property type="term" value="F:heme binding"/>
    <property type="evidence" value="ECO:0007669"/>
    <property type="project" value="InterPro"/>
</dbReference>
<dbReference type="GO" id="GO:0030544">
    <property type="term" value="F:Hsp70 protein binding"/>
    <property type="evidence" value="ECO:0000250"/>
    <property type="project" value="UniProtKB"/>
</dbReference>
<dbReference type="GO" id="GO:0051879">
    <property type="term" value="F:Hsp90 protein binding"/>
    <property type="evidence" value="ECO:0000250"/>
    <property type="project" value="UniProtKB"/>
</dbReference>
<dbReference type="GO" id="GO:0106256">
    <property type="term" value="F:hydroperoxy icosatetraenoate dehydratase activity"/>
    <property type="evidence" value="ECO:0007669"/>
    <property type="project" value="UniProtKB-EC"/>
</dbReference>
<dbReference type="GO" id="GO:0005506">
    <property type="term" value="F:iron ion binding"/>
    <property type="evidence" value="ECO:0007669"/>
    <property type="project" value="InterPro"/>
</dbReference>
<dbReference type="GO" id="GO:0120319">
    <property type="term" value="F:long-chain fatty acid omega-1 hydroxylase activity"/>
    <property type="evidence" value="ECO:0007669"/>
    <property type="project" value="Ensembl"/>
</dbReference>
<dbReference type="GO" id="GO:0102033">
    <property type="term" value="F:long-chain fatty acid omega-hydroxylase activity"/>
    <property type="evidence" value="ECO:0007669"/>
    <property type="project" value="Ensembl"/>
</dbReference>
<dbReference type="GO" id="GO:0004508">
    <property type="term" value="F:steroid 17-alpha-monooxygenase activity"/>
    <property type="evidence" value="ECO:0007669"/>
    <property type="project" value="TreeGrafter"/>
</dbReference>
<dbReference type="GO" id="GO:0070576">
    <property type="term" value="F:vitamin D 24-hydroxylase activity"/>
    <property type="evidence" value="ECO:0007669"/>
    <property type="project" value="Ensembl"/>
</dbReference>
<dbReference type="GO" id="GO:0009308">
    <property type="term" value="P:amine metabolic process"/>
    <property type="evidence" value="ECO:0007669"/>
    <property type="project" value="Ensembl"/>
</dbReference>
<dbReference type="GO" id="GO:0008210">
    <property type="term" value="P:estrogen metabolic process"/>
    <property type="evidence" value="ECO:0000250"/>
    <property type="project" value="UniProtKB"/>
</dbReference>
<dbReference type="GO" id="GO:0042446">
    <property type="term" value="P:hormone biosynthetic process"/>
    <property type="evidence" value="ECO:0007669"/>
    <property type="project" value="TreeGrafter"/>
</dbReference>
<dbReference type="GO" id="GO:0050665">
    <property type="term" value="P:hydrogen peroxide biosynthetic process"/>
    <property type="evidence" value="ECO:0007669"/>
    <property type="project" value="Ensembl"/>
</dbReference>
<dbReference type="GO" id="GO:0002933">
    <property type="term" value="P:lipid hydroxylation"/>
    <property type="evidence" value="ECO:0007669"/>
    <property type="project" value="Ensembl"/>
</dbReference>
<dbReference type="GO" id="GO:0001676">
    <property type="term" value="P:long-chain fatty acid metabolic process"/>
    <property type="evidence" value="ECO:0007669"/>
    <property type="project" value="Ensembl"/>
</dbReference>
<dbReference type="GO" id="GO:0018958">
    <property type="term" value="P:phenol-containing compound metabolic process"/>
    <property type="evidence" value="ECO:0007669"/>
    <property type="project" value="Ensembl"/>
</dbReference>
<dbReference type="GO" id="GO:0042448">
    <property type="term" value="P:progesterone metabolic process"/>
    <property type="evidence" value="ECO:0007669"/>
    <property type="project" value="TreeGrafter"/>
</dbReference>
<dbReference type="GO" id="GO:0009636">
    <property type="term" value="P:response to toxic substance"/>
    <property type="evidence" value="ECO:0007669"/>
    <property type="project" value="Ensembl"/>
</dbReference>
<dbReference type="GO" id="GO:0042572">
    <property type="term" value="P:retinol metabolic process"/>
    <property type="evidence" value="ECO:0000250"/>
    <property type="project" value="UniProtKB"/>
</dbReference>
<dbReference type="GO" id="GO:0006694">
    <property type="term" value="P:steroid biosynthetic process"/>
    <property type="evidence" value="ECO:0007669"/>
    <property type="project" value="UniProtKB-KW"/>
</dbReference>
<dbReference type="GO" id="GO:0009404">
    <property type="term" value="P:toxin metabolic process"/>
    <property type="evidence" value="ECO:0007669"/>
    <property type="project" value="Ensembl"/>
</dbReference>
<dbReference type="GO" id="GO:0042359">
    <property type="term" value="P:vitamin D metabolic process"/>
    <property type="evidence" value="ECO:0007669"/>
    <property type="project" value="Ensembl"/>
</dbReference>
<dbReference type="GO" id="GO:0006805">
    <property type="term" value="P:xenobiotic metabolic process"/>
    <property type="evidence" value="ECO:0007669"/>
    <property type="project" value="Ensembl"/>
</dbReference>
<dbReference type="CDD" id="cd20676">
    <property type="entry name" value="CYP1A"/>
    <property type="match status" value="1"/>
</dbReference>
<dbReference type="FunFam" id="1.10.630.10:FF:000002">
    <property type="entry name" value="Cytochrome P450 1A1"/>
    <property type="match status" value="1"/>
</dbReference>
<dbReference type="Gene3D" id="1.10.630.10">
    <property type="entry name" value="Cytochrome P450"/>
    <property type="match status" value="1"/>
</dbReference>
<dbReference type="InterPro" id="IPR001128">
    <property type="entry name" value="Cyt_P450"/>
</dbReference>
<dbReference type="InterPro" id="IPR017972">
    <property type="entry name" value="Cyt_P450_CS"/>
</dbReference>
<dbReference type="InterPro" id="IPR002401">
    <property type="entry name" value="Cyt_P450_E_grp-I"/>
</dbReference>
<dbReference type="InterPro" id="IPR008066">
    <property type="entry name" value="Cyt_P450_E_grp-I_CYP1"/>
</dbReference>
<dbReference type="InterPro" id="IPR036396">
    <property type="entry name" value="Cyt_P450_sf"/>
</dbReference>
<dbReference type="PANTHER" id="PTHR24289:SF21">
    <property type="entry name" value="CYTOCHROME P450 1A"/>
    <property type="match status" value="1"/>
</dbReference>
<dbReference type="PANTHER" id="PTHR24289">
    <property type="entry name" value="STEROID 17-ALPHA-HYDROXYLASE/17,20 LYASE"/>
    <property type="match status" value="1"/>
</dbReference>
<dbReference type="Pfam" id="PF00067">
    <property type="entry name" value="p450"/>
    <property type="match status" value="1"/>
</dbReference>
<dbReference type="PRINTS" id="PR00463">
    <property type="entry name" value="EP450I"/>
</dbReference>
<dbReference type="PRINTS" id="PR01683">
    <property type="entry name" value="EP450ICYP1A"/>
</dbReference>
<dbReference type="PRINTS" id="PR00385">
    <property type="entry name" value="P450"/>
</dbReference>
<dbReference type="SUPFAM" id="SSF48264">
    <property type="entry name" value="Cytochrome P450"/>
    <property type="match status" value="1"/>
</dbReference>
<dbReference type="PROSITE" id="PS00086">
    <property type="entry name" value="CYTOCHROME_P450"/>
    <property type="match status" value="1"/>
</dbReference>
<gene>
    <name type="primary">CYP1A1</name>
</gene>
<keyword id="KW-0963">Cytoplasm</keyword>
<keyword id="KW-0256">Endoplasmic reticulum</keyword>
<keyword id="KW-0325">Glycoprotein</keyword>
<keyword id="KW-0349">Heme</keyword>
<keyword id="KW-0408">Iron</keyword>
<keyword id="KW-0444">Lipid biosynthesis</keyword>
<keyword id="KW-0443">Lipid metabolism</keyword>
<keyword id="KW-0456">Lyase</keyword>
<keyword id="KW-0472">Membrane</keyword>
<keyword id="KW-0479">Metal-binding</keyword>
<keyword id="KW-0492">Microsome</keyword>
<keyword id="KW-0496">Mitochondrion</keyword>
<keyword id="KW-0999">Mitochondrion inner membrane</keyword>
<keyword id="KW-0503">Monooxygenase</keyword>
<keyword id="KW-0560">Oxidoreductase</keyword>
<keyword id="KW-1185">Reference proteome</keyword>
<keyword id="KW-0752">Steroid biosynthesis</keyword>
<evidence type="ECO:0000250" key="1"/>
<evidence type="ECO:0000250" key="2">
    <source>
        <dbReference type="UniProtKB" id="P00185"/>
    </source>
</evidence>
<evidence type="ECO:0000250" key="3">
    <source>
        <dbReference type="UniProtKB" id="P04798"/>
    </source>
</evidence>
<evidence type="ECO:0000305" key="4"/>